<protein>
    <recommendedName>
        <fullName evidence="1">NADH-quinone oxidoreductase subunit I 1</fullName>
        <ecNumber evidence="1">7.1.1.-</ecNumber>
    </recommendedName>
    <alternativeName>
        <fullName evidence="1">NADH dehydrogenase I subunit I 1</fullName>
    </alternativeName>
    <alternativeName>
        <fullName evidence="1">NDH-1 subunit I 1</fullName>
    </alternativeName>
</protein>
<reference key="1">
    <citation type="submission" date="2006-03" db="EMBL/GenBank/DDBJ databases">
        <title>Complete sequence of Rhodopseudomonas palustris BisB5.</title>
        <authorList>
            <consortium name="US DOE Joint Genome Institute"/>
            <person name="Copeland A."/>
            <person name="Lucas S."/>
            <person name="Lapidus A."/>
            <person name="Barry K."/>
            <person name="Detter J.C."/>
            <person name="Glavina del Rio T."/>
            <person name="Hammon N."/>
            <person name="Israni S."/>
            <person name="Dalin E."/>
            <person name="Tice H."/>
            <person name="Pitluck S."/>
            <person name="Chain P."/>
            <person name="Malfatti S."/>
            <person name="Shin M."/>
            <person name="Vergez L."/>
            <person name="Schmutz J."/>
            <person name="Larimer F."/>
            <person name="Land M."/>
            <person name="Hauser L."/>
            <person name="Pelletier D.A."/>
            <person name="Kyrpides N."/>
            <person name="Lykidis A."/>
            <person name="Oda Y."/>
            <person name="Harwood C.S."/>
            <person name="Richardson P."/>
        </authorList>
    </citation>
    <scope>NUCLEOTIDE SEQUENCE [LARGE SCALE GENOMIC DNA]</scope>
    <source>
        <strain>BisB5</strain>
    </source>
</reference>
<feature type="chain" id="PRO_0000298545" description="NADH-quinone oxidoreductase subunit I 1">
    <location>
        <begin position="1"/>
        <end position="171"/>
    </location>
</feature>
<feature type="domain" description="4Fe-4S ferredoxin-type 1" evidence="1">
    <location>
        <begin position="39"/>
        <end position="71"/>
    </location>
</feature>
<feature type="domain" description="4Fe-4S ferredoxin-type 2" evidence="1">
    <location>
        <begin position="81"/>
        <end position="110"/>
    </location>
</feature>
<feature type="binding site" evidence="1">
    <location>
        <position position="51"/>
    </location>
    <ligand>
        <name>[4Fe-4S] cluster</name>
        <dbReference type="ChEBI" id="CHEBI:49883"/>
        <label>1</label>
    </ligand>
</feature>
<feature type="binding site" evidence="1">
    <location>
        <position position="54"/>
    </location>
    <ligand>
        <name>[4Fe-4S] cluster</name>
        <dbReference type="ChEBI" id="CHEBI:49883"/>
        <label>1</label>
    </ligand>
</feature>
<feature type="binding site" evidence="1">
    <location>
        <position position="57"/>
    </location>
    <ligand>
        <name>[4Fe-4S] cluster</name>
        <dbReference type="ChEBI" id="CHEBI:49883"/>
        <label>1</label>
    </ligand>
</feature>
<feature type="binding site" evidence="1">
    <location>
        <position position="61"/>
    </location>
    <ligand>
        <name>[4Fe-4S] cluster</name>
        <dbReference type="ChEBI" id="CHEBI:49883"/>
        <label>2</label>
    </ligand>
</feature>
<feature type="binding site" evidence="1">
    <location>
        <position position="90"/>
    </location>
    <ligand>
        <name>[4Fe-4S] cluster</name>
        <dbReference type="ChEBI" id="CHEBI:49883"/>
        <label>2</label>
    </ligand>
</feature>
<feature type="binding site" evidence="1">
    <location>
        <position position="93"/>
    </location>
    <ligand>
        <name>[4Fe-4S] cluster</name>
        <dbReference type="ChEBI" id="CHEBI:49883"/>
        <label>2</label>
    </ligand>
</feature>
<feature type="binding site" evidence="1">
    <location>
        <position position="96"/>
    </location>
    <ligand>
        <name>[4Fe-4S] cluster</name>
        <dbReference type="ChEBI" id="CHEBI:49883"/>
        <label>2</label>
    </ligand>
</feature>
<feature type="binding site" evidence="1">
    <location>
        <position position="100"/>
    </location>
    <ligand>
        <name>[4Fe-4S] cluster</name>
        <dbReference type="ChEBI" id="CHEBI:49883"/>
        <label>1</label>
    </ligand>
</feature>
<comment type="function">
    <text evidence="1">NDH-1 shuttles electrons from NADH, via FMN and iron-sulfur (Fe-S) centers, to quinones in the respiratory chain. The immediate electron acceptor for the enzyme in this species is believed to be ubiquinone. Couples the redox reaction to proton translocation (for every two electrons transferred, four hydrogen ions are translocated across the cytoplasmic membrane), and thus conserves the redox energy in a proton gradient.</text>
</comment>
<comment type="catalytic activity">
    <reaction evidence="1">
        <text>a quinone + NADH + 5 H(+)(in) = a quinol + NAD(+) + 4 H(+)(out)</text>
        <dbReference type="Rhea" id="RHEA:57888"/>
        <dbReference type="ChEBI" id="CHEBI:15378"/>
        <dbReference type="ChEBI" id="CHEBI:24646"/>
        <dbReference type="ChEBI" id="CHEBI:57540"/>
        <dbReference type="ChEBI" id="CHEBI:57945"/>
        <dbReference type="ChEBI" id="CHEBI:132124"/>
    </reaction>
</comment>
<comment type="cofactor">
    <cofactor evidence="1">
        <name>[4Fe-4S] cluster</name>
        <dbReference type="ChEBI" id="CHEBI:49883"/>
    </cofactor>
    <text evidence="1">Binds 2 [4Fe-4S] clusters per subunit.</text>
</comment>
<comment type="subunit">
    <text evidence="1">NDH-1 is composed of 14 different subunits. Subunits NuoA, H, J, K, L, M, N constitute the membrane sector of the complex.</text>
</comment>
<comment type="subcellular location">
    <subcellularLocation>
        <location evidence="1">Cell inner membrane</location>
        <topology evidence="1">Peripheral membrane protein</topology>
    </subcellularLocation>
</comment>
<comment type="similarity">
    <text evidence="1">Belongs to the complex I 23 kDa subunit family.</text>
</comment>
<evidence type="ECO:0000255" key="1">
    <source>
        <dbReference type="HAMAP-Rule" id="MF_01351"/>
    </source>
</evidence>
<accession>Q13BG8</accession>
<proteinExistence type="inferred from homology"/>
<name>NUOI1_RHOPS</name>
<gene>
    <name evidence="1" type="primary">nuoI1</name>
    <name type="ordered locus">RPD_1333</name>
</gene>
<sequence>MIGWLEAMLRVGRKLFVKAETQLYPEEKPKLYPRSRGRIVLTRDPDGQERCVACNLCAVVCPVGCIDLTKAVADDGRWYPEHFRINFARCIFCGFCEEACPTSAIQLTPDFELGEWRRDALVYEKHDLLISGEGKVRGYRYWSVAGKAIDGKDKGEAEHESPPVDLRGLLP</sequence>
<organism>
    <name type="scientific">Rhodopseudomonas palustris (strain BisB5)</name>
    <dbReference type="NCBI Taxonomy" id="316057"/>
    <lineage>
        <taxon>Bacteria</taxon>
        <taxon>Pseudomonadati</taxon>
        <taxon>Pseudomonadota</taxon>
        <taxon>Alphaproteobacteria</taxon>
        <taxon>Hyphomicrobiales</taxon>
        <taxon>Nitrobacteraceae</taxon>
        <taxon>Rhodopseudomonas</taxon>
    </lineage>
</organism>
<dbReference type="EC" id="7.1.1.-" evidence="1"/>
<dbReference type="EMBL" id="CP000283">
    <property type="protein sequence ID" value="ABE38571.1"/>
    <property type="molecule type" value="Genomic_DNA"/>
</dbReference>
<dbReference type="SMR" id="Q13BG8"/>
<dbReference type="STRING" id="316057.RPD_1333"/>
<dbReference type="KEGG" id="rpd:RPD_1333"/>
<dbReference type="eggNOG" id="COG1143">
    <property type="taxonomic scope" value="Bacteria"/>
</dbReference>
<dbReference type="HOGENOM" id="CLU_067218_4_3_5"/>
<dbReference type="BioCyc" id="RPAL316057:RPD_RS06750-MONOMER"/>
<dbReference type="Proteomes" id="UP000001818">
    <property type="component" value="Chromosome"/>
</dbReference>
<dbReference type="GO" id="GO:0005886">
    <property type="term" value="C:plasma membrane"/>
    <property type="evidence" value="ECO:0007669"/>
    <property type="project" value="UniProtKB-SubCell"/>
</dbReference>
<dbReference type="GO" id="GO:0051539">
    <property type="term" value="F:4 iron, 4 sulfur cluster binding"/>
    <property type="evidence" value="ECO:0007669"/>
    <property type="project" value="UniProtKB-KW"/>
</dbReference>
<dbReference type="GO" id="GO:0005506">
    <property type="term" value="F:iron ion binding"/>
    <property type="evidence" value="ECO:0007669"/>
    <property type="project" value="UniProtKB-UniRule"/>
</dbReference>
<dbReference type="GO" id="GO:0050136">
    <property type="term" value="F:NADH:ubiquinone reductase (non-electrogenic) activity"/>
    <property type="evidence" value="ECO:0007669"/>
    <property type="project" value="UniProtKB-UniRule"/>
</dbReference>
<dbReference type="GO" id="GO:0048038">
    <property type="term" value="F:quinone binding"/>
    <property type="evidence" value="ECO:0007669"/>
    <property type="project" value="UniProtKB-KW"/>
</dbReference>
<dbReference type="GO" id="GO:0009060">
    <property type="term" value="P:aerobic respiration"/>
    <property type="evidence" value="ECO:0007669"/>
    <property type="project" value="TreeGrafter"/>
</dbReference>
<dbReference type="FunFam" id="3.30.70.3270:FF:000002">
    <property type="entry name" value="NADH-quinone oxidoreductase subunit I"/>
    <property type="match status" value="1"/>
</dbReference>
<dbReference type="Gene3D" id="3.30.70.3270">
    <property type="match status" value="1"/>
</dbReference>
<dbReference type="HAMAP" id="MF_01351">
    <property type="entry name" value="NDH1_NuoI"/>
    <property type="match status" value="1"/>
</dbReference>
<dbReference type="InterPro" id="IPR017896">
    <property type="entry name" value="4Fe4S_Fe-S-bd"/>
</dbReference>
<dbReference type="InterPro" id="IPR017900">
    <property type="entry name" value="4Fe4S_Fe_S_CS"/>
</dbReference>
<dbReference type="InterPro" id="IPR010226">
    <property type="entry name" value="NADH_quinone_OxRdtase_chainI"/>
</dbReference>
<dbReference type="NCBIfam" id="TIGR01971">
    <property type="entry name" value="NuoI"/>
    <property type="match status" value="1"/>
</dbReference>
<dbReference type="NCBIfam" id="NF004536">
    <property type="entry name" value="PRK05888.1-1"/>
    <property type="match status" value="1"/>
</dbReference>
<dbReference type="PANTHER" id="PTHR10849:SF20">
    <property type="entry name" value="NADH DEHYDROGENASE [UBIQUINONE] IRON-SULFUR PROTEIN 8, MITOCHONDRIAL"/>
    <property type="match status" value="1"/>
</dbReference>
<dbReference type="PANTHER" id="PTHR10849">
    <property type="entry name" value="NADH DEHYDROGENASE UBIQUINONE IRON-SULFUR PROTEIN 8, MITOCHONDRIAL"/>
    <property type="match status" value="1"/>
</dbReference>
<dbReference type="Pfam" id="PF12838">
    <property type="entry name" value="Fer4_7"/>
    <property type="match status" value="1"/>
</dbReference>
<dbReference type="SUPFAM" id="SSF54862">
    <property type="entry name" value="4Fe-4S ferredoxins"/>
    <property type="match status" value="1"/>
</dbReference>
<dbReference type="PROSITE" id="PS00198">
    <property type="entry name" value="4FE4S_FER_1"/>
    <property type="match status" value="2"/>
</dbReference>
<dbReference type="PROSITE" id="PS51379">
    <property type="entry name" value="4FE4S_FER_2"/>
    <property type="match status" value="2"/>
</dbReference>
<keyword id="KW-0004">4Fe-4S</keyword>
<keyword id="KW-0997">Cell inner membrane</keyword>
<keyword id="KW-1003">Cell membrane</keyword>
<keyword id="KW-0408">Iron</keyword>
<keyword id="KW-0411">Iron-sulfur</keyword>
<keyword id="KW-0472">Membrane</keyword>
<keyword id="KW-0479">Metal-binding</keyword>
<keyword id="KW-0520">NAD</keyword>
<keyword id="KW-0874">Quinone</keyword>
<keyword id="KW-0677">Repeat</keyword>
<keyword id="KW-1278">Translocase</keyword>
<keyword id="KW-0830">Ubiquinone</keyword>